<name>GCDH_BOVIN</name>
<reference key="1">
    <citation type="submission" date="2006-01" db="EMBL/GenBank/DDBJ databases">
        <authorList>
            <consortium name="NIH - Mammalian Gene Collection (MGC) project"/>
        </authorList>
    </citation>
    <scope>NUCLEOTIDE SEQUENCE [LARGE SCALE MRNA]</scope>
    <source>
        <strain>Hereford</strain>
        <tissue>Heart ventricle</tissue>
    </source>
</reference>
<evidence type="ECO:0000250" key="1"/>
<evidence type="ECO:0000250" key="2">
    <source>
        <dbReference type="UniProtKB" id="Q60759"/>
    </source>
</evidence>
<evidence type="ECO:0000255" key="3"/>
<evidence type="ECO:0000305" key="4"/>
<accession>Q2KHZ9</accession>
<organism>
    <name type="scientific">Bos taurus</name>
    <name type="common">Bovine</name>
    <dbReference type="NCBI Taxonomy" id="9913"/>
    <lineage>
        <taxon>Eukaryota</taxon>
        <taxon>Metazoa</taxon>
        <taxon>Chordata</taxon>
        <taxon>Craniata</taxon>
        <taxon>Vertebrata</taxon>
        <taxon>Euteleostomi</taxon>
        <taxon>Mammalia</taxon>
        <taxon>Eutheria</taxon>
        <taxon>Laurasiatheria</taxon>
        <taxon>Artiodactyla</taxon>
        <taxon>Ruminantia</taxon>
        <taxon>Pecora</taxon>
        <taxon>Bovidae</taxon>
        <taxon>Bovinae</taxon>
        <taxon>Bos</taxon>
    </lineage>
</organism>
<keyword id="KW-0007">Acetylation</keyword>
<keyword id="KW-0274">FAD</keyword>
<keyword id="KW-0285">Flavoprotein</keyword>
<keyword id="KW-0496">Mitochondrion</keyword>
<keyword id="KW-0560">Oxidoreductase</keyword>
<keyword id="KW-1185">Reference proteome</keyword>
<keyword id="KW-0809">Transit peptide</keyword>
<sequence length="438" mass="48472">MALRGVYAQLLNRGPGLRVFRSWSSATAQTEKGEKTQSRSAKPSRPEFDWRDPLLLEEQLTADEILIRDTFRTYCQERLMPRILLANRNEVFHREIISEMGELGMLGPTIQGYSCAGVSSVAYGLLARELERVDSGYRSAMSVQSSLVMYPIYAYGSEEQKQKYLPRLAKGELLGCFGLTEPNHGSDPSGMETRARHNPSSRSYILSGSKTWITNSPVADLLIVWARCEDSCIRGFLLEKGMRGLSTPRIEGKFSLRASSTGMIIMDDVEVPEENVLPGVSGLAGPFGCLNNARYGITWGVLGAAEFCLHTARQYTLDRIQFGVPLAKNQLIQKKLADMLTEITLGLHACLQLGRLKDQDKAAPEMVSLLKRNNCGKALDIARQARDMLGGNGISDEYHVIRHVMNLESVNTYEGTHDIHALILGRAITGIQAFVAGK</sequence>
<comment type="function">
    <text evidence="1">Catalyzes the oxidative decarboxylation of glutaryl-CoA to crotonyl-CoA and CO(2) in the degradative pathway of L-lysine, L-hydroxylysine, and L-tryptophan metabolism. It uses electron transfer flavoprotein as its electron acceptor (By similarity).</text>
</comment>
<comment type="catalytic activity">
    <reaction>
        <text>glutaryl-CoA + oxidized [electron-transfer flavoprotein] + 2 H(+) = (2E)-butenoyl-CoA + reduced [electron-transfer flavoprotein] + CO2</text>
        <dbReference type="Rhea" id="RHEA:13389"/>
        <dbReference type="Rhea" id="RHEA-COMP:10685"/>
        <dbReference type="Rhea" id="RHEA-COMP:10686"/>
        <dbReference type="ChEBI" id="CHEBI:15378"/>
        <dbReference type="ChEBI" id="CHEBI:16526"/>
        <dbReference type="ChEBI" id="CHEBI:57332"/>
        <dbReference type="ChEBI" id="CHEBI:57378"/>
        <dbReference type="ChEBI" id="CHEBI:57692"/>
        <dbReference type="ChEBI" id="CHEBI:58307"/>
        <dbReference type="EC" id="1.3.8.6"/>
    </reaction>
</comment>
<comment type="cofactor">
    <cofactor evidence="1">
        <name>FAD</name>
        <dbReference type="ChEBI" id="CHEBI:57692"/>
    </cofactor>
</comment>
<comment type="pathway">
    <text>Amino-acid metabolism; lysine degradation.</text>
</comment>
<comment type="pathway">
    <text>Amino-acid metabolism; tryptophan metabolism.</text>
</comment>
<comment type="subunit">
    <text evidence="1">Homotetramer.</text>
</comment>
<comment type="subcellular location">
    <subcellularLocation>
        <location evidence="1">Mitochondrion matrix</location>
    </subcellularLocation>
</comment>
<comment type="similarity">
    <text evidence="4">Belongs to the acyl-CoA dehydrogenase family.</text>
</comment>
<dbReference type="EC" id="1.3.8.6"/>
<dbReference type="EMBL" id="BC112822">
    <property type="protein sequence ID" value="AAI12823.1"/>
    <property type="molecule type" value="mRNA"/>
</dbReference>
<dbReference type="RefSeq" id="NP_001039404.1">
    <property type="nucleotide sequence ID" value="NM_001045939.2"/>
</dbReference>
<dbReference type="SMR" id="Q2KHZ9"/>
<dbReference type="FunCoup" id="Q2KHZ9">
    <property type="interactions" value="2143"/>
</dbReference>
<dbReference type="STRING" id="9913.ENSBTAP00000059618"/>
<dbReference type="PaxDb" id="9913-ENSBTAP00000043333"/>
<dbReference type="PeptideAtlas" id="Q2KHZ9"/>
<dbReference type="GeneID" id="506310"/>
<dbReference type="KEGG" id="bta:506310"/>
<dbReference type="CTD" id="2639"/>
<dbReference type="VEuPathDB" id="HostDB:ENSBTAG00000016211"/>
<dbReference type="eggNOG" id="KOG0138">
    <property type="taxonomic scope" value="Eukaryota"/>
</dbReference>
<dbReference type="HOGENOM" id="CLU_018204_8_0_1"/>
<dbReference type="InParanoid" id="Q2KHZ9"/>
<dbReference type="OMA" id="HMMNLES"/>
<dbReference type="OrthoDB" id="435240at2759"/>
<dbReference type="TreeFam" id="TF105051"/>
<dbReference type="Reactome" id="R-BTA-71064">
    <property type="pathway name" value="Lysine catabolism"/>
</dbReference>
<dbReference type="UniPathway" id="UPA00224"/>
<dbReference type="UniPathway" id="UPA00225"/>
<dbReference type="Proteomes" id="UP000009136">
    <property type="component" value="Chromosome 7"/>
</dbReference>
<dbReference type="Bgee" id="ENSBTAG00000016211">
    <property type="expression patterns" value="Expressed in cortex of kidney and 105 other cell types or tissues"/>
</dbReference>
<dbReference type="GO" id="GO:0005759">
    <property type="term" value="C:mitochondrial matrix"/>
    <property type="evidence" value="ECO:0007669"/>
    <property type="project" value="UniProtKB-SubCell"/>
</dbReference>
<dbReference type="GO" id="GO:0000062">
    <property type="term" value="F:fatty-acyl-CoA binding"/>
    <property type="evidence" value="ECO:0000318"/>
    <property type="project" value="GO_Central"/>
</dbReference>
<dbReference type="GO" id="GO:0050660">
    <property type="term" value="F:flavin adenine dinucleotide binding"/>
    <property type="evidence" value="ECO:0000318"/>
    <property type="project" value="GO_Central"/>
</dbReference>
<dbReference type="GO" id="GO:0004361">
    <property type="term" value="F:glutaryl-CoA dehydrogenase activity"/>
    <property type="evidence" value="ECO:0000318"/>
    <property type="project" value="GO_Central"/>
</dbReference>
<dbReference type="GO" id="GO:0033539">
    <property type="term" value="P:fatty acid beta-oxidation using acyl-CoA dehydrogenase"/>
    <property type="evidence" value="ECO:0000250"/>
    <property type="project" value="UniProtKB"/>
</dbReference>
<dbReference type="GO" id="GO:0046949">
    <property type="term" value="P:fatty-acyl-CoA biosynthetic process"/>
    <property type="evidence" value="ECO:0000318"/>
    <property type="project" value="GO_Central"/>
</dbReference>
<dbReference type="GO" id="GO:0006568">
    <property type="term" value="P:L-tryptophan metabolic process"/>
    <property type="evidence" value="ECO:0007669"/>
    <property type="project" value="UniProtKB-UniPathway"/>
</dbReference>
<dbReference type="CDD" id="cd01151">
    <property type="entry name" value="GCD"/>
    <property type="match status" value="1"/>
</dbReference>
<dbReference type="FunFam" id="1.20.140.10:FF:000006">
    <property type="entry name" value="Glutaryl-CoA dehydrogenase, mitochondrial"/>
    <property type="match status" value="1"/>
</dbReference>
<dbReference type="FunFam" id="2.40.110.10:FF:000008">
    <property type="entry name" value="Glutaryl-CoA dehydrogenase, mitochondrial"/>
    <property type="match status" value="1"/>
</dbReference>
<dbReference type="FunFam" id="1.10.540.10:FF:000003">
    <property type="entry name" value="glutaryl-CoA dehydrogenase, mitochondrial"/>
    <property type="match status" value="1"/>
</dbReference>
<dbReference type="Gene3D" id="1.10.540.10">
    <property type="entry name" value="Acyl-CoA dehydrogenase/oxidase, N-terminal domain"/>
    <property type="match status" value="1"/>
</dbReference>
<dbReference type="Gene3D" id="2.40.110.10">
    <property type="entry name" value="Butyryl-CoA Dehydrogenase, subunit A, domain 2"/>
    <property type="match status" value="1"/>
</dbReference>
<dbReference type="Gene3D" id="1.20.140.10">
    <property type="entry name" value="Butyryl-CoA Dehydrogenase, subunit A, domain 3"/>
    <property type="match status" value="1"/>
</dbReference>
<dbReference type="InterPro" id="IPR006089">
    <property type="entry name" value="Acyl-CoA_DH_CS"/>
</dbReference>
<dbReference type="InterPro" id="IPR006091">
    <property type="entry name" value="Acyl-CoA_Oxase/DH_mid-dom"/>
</dbReference>
<dbReference type="InterPro" id="IPR046373">
    <property type="entry name" value="Acyl-CoA_Oxase/DH_mid-dom_sf"/>
</dbReference>
<dbReference type="InterPro" id="IPR036250">
    <property type="entry name" value="AcylCo_DH-like_C"/>
</dbReference>
<dbReference type="InterPro" id="IPR009075">
    <property type="entry name" value="AcylCo_DH/oxidase_C"/>
</dbReference>
<dbReference type="InterPro" id="IPR013786">
    <property type="entry name" value="AcylCoA_DH/ox_N"/>
</dbReference>
<dbReference type="InterPro" id="IPR037069">
    <property type="entry name" value="AcylCoA_DH/ox_N_sf"/>
</dbReference>
<dbReference type="InterPro" id="IPR009100">
    <property type="entry name" value="AcylCoA_DH/oxidase_NM_dom_sf"/>
</dbReference>
<dbReference type="InterPro" id="IPR052033">
    <property type="entry name" value="Glutaryl-CoA_DH_mitochondrial"/>
</dbReference>
<dbReference type="PANTHER" id="PTHR42807">
    <property type="entry name" value="GLUTARYL-COA DEHYDROGENASE, MITOCHONDRIAL"/>
    <property type="match status" value="1"/>
</dbReference>
<dbReference type="PANTHER" id="PTHR42807:SF1">
    <property type="entry name" value="GLUTARYL-COA DEHYDROGENASE, MITOCHONDRIAL"/>
    <property type="match status" value="1"/>
</dbReference>
<dbReference type="Pfam" id="PF00441">
    <property type="entry name" value="Acyl-CoA_dh_1"/>
    <property type="match status" value="1"/>
</dbReference>
<dbReference type="Pfam" id="PF02770">
    <property type="entry name" value="Acyl-CoA_dh_M"/>
    <property type="match status" value="1"/>
</dbReference>
<dbReference type="Pfam" id="PF02771">
    <property type="entry name" value="Acyl-CoA_dh_N"/>
    <property type="match status" value="1"/>
</dbReference>
<dbReference type="SUPFAM" id="SSF47203">
    <property type="entry name" value="Acyl-CoA dehydrogenase C-terminal domain-like"/>
    <property type="match status" value="1"/>
</dbReference>
<dbReference type="SUPFAM" id="SSF56645">
    <property type="entry name" value="Acyl-CoA dehydrogenase NM domain-like"/>
    <property type="match status" value="1"/>
</dbReference>
<dbReference type="PROSITE" id="PS00073">
    <property type="entry name" value="ACYL_COA_DH_2"/>
    <property type="match status" value="1"/>
</dbReference>
<protein>
    <recommendedName>
        <fullName>Glutaryl-CoA dehydrogenase, mitochondrial</fullName>
        <shortName>GCD</shortName>
        <ecNumber>1.3.8.6</ecNumber>
    </recommendedName>
</protein>
<gene>
    <name type="primary">GCDH</name>
</gene>
<proteinExistence type="evidence at transcript level"/>
<feature type="transit peptide" description="Mitochondrion" evidence="3">
    <location>
        <begin position="1"/>
        <end position="44"/>
    </location>
</feature>
<feature type="chain" id="PRO_0000281992" description="Glutaryl-CoA dehydrogenase, mitochondrial">
    <location>
        <begin position="45"/>
        <end position="438"/>
    </location>
</feature>
<feature type="active site" description="Proton acceptor" evidence="1">
    <location>
        <position position="414"/>
    </location>
</feature>
<feature type="binding site" evidence="1">
    <location>
        <begin position="138"/>
        <end position="139"/>
    </location>
    <ligand>
        <name>substrate</name>
    </ligand>
</feature>
<feature type="binding site" evidence="1">
    <location>
        <begin position="177"/>
        <end position="186"/>
    </location>
    <ligand>
        <name>FAD</name>
        <dbReference type="ChEBI" id="CHEBI:57692"/>
    </ligand>
</feature>
<feature type="binding site" evidence="1">
    <location>
        <position position="186"/>
    </location>
    <ligand>
        <name>FAD</name>
        <dbReference type="ChEBI" id="CHEBI:57692"/>
    </ligand>
</feature>
<feature type="binding site" evidence="1">
    <location>
        <position position="186"/>
    </location>
    <ligand>
        <name>substrate</name>
    </ligand>
</feature>
<feature type="binding site" evidence="1">
    <location>
        <begin position="212"/>
        <end position="214"/>
    </location>
    <ligand>
        <name>FAD</name>
        <dbReference type="ChEBI" id="CHEBI:57692"/>
    </ligand>
</feature>
<feature type="binding site" evidence="1">
    <location>
        <begin position="287"/>
        <end position="294"/>
    </location>
    <ligand>
        <name>substrate</name>
    </ligand>
</feature>
<feature type="binding site" evidence="1">
    <location>
        <position position="319"/>
    </location>
    <ligand>
        <name>FAD</name>
        <dbReference type="ChEBI" id="CHEBI:57692"/>
    </ligand>
</feature>
<feature type="binding site" evidence="1">
    <location>
        <position position="330"/>
    </location>
    <ligand>
        <name>FAD</name>
        <dbReference type="ChEBI" id="CHEBI:57692"/>
    </ligand>
</feature>
<feature type="binding site" evidence="1">
    <location>
        <begin position="387"/>
        <end position="391"/>
    </location>
    <ligand>
        <name>FAD</name>
        <dbReference type="ChEBI" id="CHEBI:57692"/>
    </ligand>
</feature>
<feature type="binding site" evidence="1">
    <location>
        <position position="415"/>
    </location>
    <ligand>
        <name>substrate</name>
    </ligand>
</feature>
<feature type="binding site" evidence="1">
    <location>
        <begin position="416"/>
        <end position="418"/>
    </location>
    <ligand>
        <name>FAD</name>
        <dbReference type="ChEBI" id="CHEBI:57692"/>
    </ligand>
</feature>
<feature type="binding site" evidence="1">
    <location>
        <position position="416"/>
    </location>
    <ligand>
        <name>FAD</name>
        <dbReference type="ChEBI" id="CHEBI:57692"/>
    </ligand>
</feature>
<feature type="binding site" evidence="1">
    <location>
        <position position="434"/>
    </location>
    <ligand>
        <name>FAD</name>
        <dbReference type="ChEBI" id="CHEBI:57692"/>
    </ligand>
</feature>
<feature type="modified residue" description="N6-acetyllysine" evidence="2">
    <location>
        <position position="240"/>
    </location>
</feature>